<protein>
    <recommendedName>
        <fullName evidence="1">Nucleotide-binding protein GTNG_0630</fullName>
    </recommendedName>
</protein>
<keyword id="KW-0547">Nucleotide-binding</keyword>
<feature type="chain" id="PRO_1000051729" description="Nucleotide-binding protein GTNG_0630">
    <location>
        <begin position="1"/>
        <end position="163"/>
    </location>
</feature>
<proteinExistence type="inferred from homology"/>
<sequence length="163" mass="18165">MAKESSFDIVSKVDLAEVTNAINIAMKEIKTRYDFKGSKSDISLEKDELVLISDDEFKLEQLKDVLIGKLIKRGVATKNIQYGKIEPASGGTVRQRAKLVQGIDKDNAKKINTIIKSTGLKVKSQVQDDQIRVSGKSKDDLQKVIAAIREADLPIDVQFVNYR</sequence>
<reference key="1">
    <citation type="journal article" date="2007" name="Proc. Natl. Acad. Sci. U.S.A.">
        <title>Genome and proteome of long-chain alkane degrading Geobacillus thermodenitrificans NG80-2 isolated from a deep-subsurface oil reservoir.</title>
        <authorList>
            <person name="Feng L."/>
            <person name="Wang W."/>
            <person name="Cheng J."/>
            <person name="Ren Y."/>
            <person name="Zhao G."/>
            <person name="Gao C."/>
            <person name="Tang Y."/>
            <person name="Liu X."/>
            <person name="Han W."/>
            <person name="Peng X."/>
            <person name="Liu R."/>
            <person name="Wang L."/>
        </authorList>
    </citation>
    <scope>NUCLEOTIDE SEQUENCE [LARGE SCALE GENOMIC DNA]</scope>
    <source>
        <strain>NG80-2</strain>
    </source>
</reference>
<organism>
    <name type="scientific">Geobacillus thermodenitrificans (strain NG80-2)</name>
    <dbReference type="NCBI Taxonomy" id="420246"/>
    <lineage>
        <taxon>Bacteria</taxon>
        <taxon>Bacillati</taxon>
        <taxon>Bacillota</taxon>
        <taxon>Bacilli</taxon>
        <taxon>Bacillales</taxon>
        <taxon>Anoxybacillaceae</taxon>
        <taxon>Geobacillus</taxon>
    </lineage>
</organism>
<accession>A4IL06</accession>
<gene>
    <name type="ordered locus">GTNG_0630</name>
</gene>
<name>Y630_GEOTN</name>
<comment type="function">
    <text evidence="1">Nucleotide-binding protein.</text>
</comment>
<comment type="similarity">
    <text evidence="1">Belongs to the YajQ family.</text>
</comment>
<evidence type="ECO:0000255" key="1">
    <source>
        <dbReference type="HAMAP-Rule" id="MF_00632"/>
    </source>
</evidence>
<dbReference type="EMBL" id="CP000557">
    <property type="protein sequence ID" value="ABO66010.1"/>
    <property type="molecule type" value="Genomic_DNA"/>
</dbReference>
<dbReference type="RefSeq" id="WP_008879048.1">
    <property type="nucleotide sequence ID" value="NC_009328.1"/>
</dbReference>
<dbReference type="SMR" id="A4IL06"/>
<dbReference type="GeneID" id="87621739"/>
<dbReference type="KEGG" id="gtn:GTNG_0630"/>
<dbReference type="eggNOG" id="COG1666">
    <property type="taxonomic scope" value="Bacteria"/>
</dbReference>
<dbReference type="HOGENOM" id="CLU_099839_1_0_9"/>
<dbReference type="Proteomes" id="UP000001578">
    <property type="component" value="Chromosome"/>
</dbReference>
<dbReference type="GO" id="GO:0005829">
    <property type="term" value="C:cytosol"/>
    <property type="evidence" value="ECO:0007669"/>
    <property type="project" value="TreeGrafter"/>
</dbReference>
<dbReference type="GO" id="GO:0000166">
    <property type="term" value="F:nucleotide binding"/>
    <property type="evidence" value="ECO:0007669"/>
    <property type="project" value="TreeGrafter"/>
</dbReference>
<dbReference type="CDD" id="cd11740">
    <property type="entry name" value="YajQ_like"/>
    <property type="match status" value="1"/>
</dbReference>
<dbReference type="FunFam" id="3.30.70.990:FF:000002">
    <property type="entry name" value="UPF0234 protein LEP1GSC067_4943"/>
    <property type="match status" value="1"/>
</dbReference>
<dbReference type="FunFam" id="3.30.70.860:FF:000003">
    <property type="entry name" value="UPF0234 protein YBT020_06460"/>
    <property type="match status" value="1"/>
</dbReference>
<dbReference type="Gene3D" id="3.30.70.860">
    <property type="match status" value="1"/>
</dbReference>
<dbReference type="Gene3D" id="3.30.70.990">
    <property type="entry name" value="YajQ-like, domain 2"/>
    <property type="match status" value="1"/>
</dbReference>
<dbReference type="HAMAP" id="MF_00632">
    <property type="entry name" value="YajQ"/>
    <property type="match status" value="1"/>
</dbReference>
<dbReference type="InterPro" id="IPR007551">
    <property type="entry name" value="DUF520"/>
</dbReference>
<dbReference type="InterPro" id="IPR035571">
    <property type="entry name" value="UPF0234-like_C"/>
</dbReference>
<dbReference type="InterPro" id="IPR035570">
    <property type="entry name" value="UPF0234_N"/>
</dbReference>
<dbReference type="InterPro" id="IPR036183">
    <property type="entry name" value="YajQ-like_sf"/>
</dbReference>
<dbReference type="NCBIfam" id="NF003819">
    <property type="entry name" value="PRK05412.1"/>
    <property type="match status" value="1"/>
</dbReference>
<dbReference type="PANTHER" id="PTHR30476">
    <property type="entry name" value="UPF0234 PROTEIN YAJQ"/>
    <property type="match status" value="1"/>
</dbReference>
<dbReference type="PANTHER" id="PTHR30476:SF0">
    <property type="entry name" value="UPF0234 PROTEIN YAJQ"/>
    <property type="match status" value="1"/>
</dbReference>
<dbReference type="Pfam" id="PF04461">
    <property type="entry name" value="DUF520"/>
    <property type="match status" value="1"/>
</dbReference>
<dbReference type="SUPFAM" id="SSF89963">
    <property type="entry name" value="YajQ-like"/>
    <property type="match status" value="2"/>
</dbReference>